<gene>
    <name evidence="6" type="primary">Krtdap</name>
    <name evidence="4" type="synonym">Kdap</name>
</gene>
<sequence>MKIPILPIVALLSLLALHAAQGAALGTPMEDTTSSNYPSGTEGLSEFLNFNKLQSAFKSDDFLNWHVLTDMFKKALPFINWEFFPKVKGLRSAVPDSQ</sequence>
<reference evidence="5" key="1">
    <citation type="journal article" date="2000" name="Gene">
        <title>Kdap, a novel gene associated with the stratification of the epithelium.</title>
        <authorList>
            <person name="Oomizu S."/>
            <person name="Sahuc F."/>
            <person name="Asahina K."/>
            <person name="Inamatsu M."/>
            <person name="Matsuzaki T."/>
            <person name="Sasaki M."/>
            <person name="Obara M."/>
            <person name="Yoshizato K."/>
        </authorList>
    </citation>
    <scope>NUCLEOTIDE SEQUENCE [MRNA] (ISOFORMS 1; 2; 3 AND 4)</scope>
    <scope>FUNCTION</scope>
    <scope>TISSUE SPECIFICITY</scope>
    <scope>INDUCTION</scope>
</reference>
<feature type="signal peptide" evidence="2">
    <location>
        <begin position="1"/>
        <end position="22"/>
    </location>
</feature>
<feature type="chain" id="PRO_0000317057" description="Keratinocyte differentiation-associated protein" evidence="2">
    <location>
        <begin position="23"/>
        <end position="98"/>
    </location>
</feature>
<feature type="splice variant" id="VSP_030857" description="In isoform 2 and isoform 4." evidence="4">
    <location>
        <begin position="43"/>
        <end position="55"/>
    </location>
</feature>
<feature type="splice variant" id="VSP_030858" description="In isoform 3 and isoform 4." evidence="4">
    <location>
        <begin position="87"/>
        <end position="98"/>
    </location>
</feature>
<name>KTDAP_RAT</name>
<accession>P85411</accession>
<proteinExistence type="evidence at transcript level"/>
<evidence type="ECO:0000250" key="1">
    <source>
        <dbReference type="UniProtKB" id="P60985"/>
    </source>
</evidence>
<evidence type="ECO:0000255" key="2"/>
<evidence type="ECO:0000269" key="3">
    <source>
    </source>
</evidence>
<evidence type="ECO:0000303" key="4">
    <source>
    </source>
</evidence>
<evidence type="ECO:0000305" key="5"/>
<evidence type="ECO:0000312" key="6">
    <source>
        <dbReference type="RGD" id="71086"/>
    </source>
</evidence>
<protein>
    <recommendedName>
        <fullName>Keratinocyte differentiation-associated protein</fullName>
    </recommendedName>
</protein>
<comment type="function">
    <text evidence="1 3">May act as a soluble regulator of keratinocyte differentiation (By similarity). May play an important role in embryonic skin morphogenesis.</text>
</comment>
<comment type="subcellular location">
    <subcellularLocation>
        <location evidence="1">Secreted</location>
    </subcellularLocation>
</comment>
<comment type="alternative products">
    <event type="alternative splicing"/>
    <isoform>
        <id>P85411-1</id>
        <name evidence="3">1</name>
        <name evidence="3">a</name>
        <sequence type="displayed"/>
    </isoform>
    <isoform>
        <id>P85411-2</id>
        <name evidence="3">2</name>
        <name evidence="3">b</name>
        <sequence type="described" ref="VSP_030857"/>
    </isoform>
    <isoform>
        <id>P85411-3</id>
        <name evidence="3">3</name>
        <name evidence="3">c</name>
        <sequence type="described" ref="VSP_030858"/>
    </isoform>
    <isoform>
        <id>P85411-4</id>
        <name evidence="3">4</name>
        <name evidence="3">d</name>
        <sequence type="described" ref="VSP_030857 VSP_030858"/>
    </isoform>
</comment>
<comment type="tissue specificity">
    <text evidence="3">Ubiquitously expressed in stratified epithelium.</text>
</comment>
<comment type="induction">
    <text evidence="3">Up-regulated in suprabasal cell layers of embryonic and adult epidermis.</text>
</comment>
<organism>
    <name type="scientific">Rattus norvegicus</name>
    <name type="common">Rat</name>
    <dbReference type="NCBI Taxonomy" id="10116"/>
    <lineage>
        <taxon>Eukaryota</taxon>
        <taxon>Metazoa</taxon>
        <taxon>Chordata</taxon>
        <taxon>Craniata</taxon>
        <taxon>Vertebrata</taxon>
        <taxon>Euteleostomi</taxon>
        <taxon>Mammalia</taxon>
        <taxon>Eutheria</taxon>
        <taxon>Euarchontoglires</taxon>
        <taxon>Glires</taxon>
        <taxon>Rodentia</taxon>
        <taxon>Myomorpha</taxon>
        <taxon>Muroidea</taxon>
        <taxon>Muridae</taxon>
        <taxon>Murinae</taxon>
        <taxon>Rattus</taxon>
    </lineage>
</organism>
<keyword id="KW-0025">Alternative splicing</keyword>
<keyword id="KW-0221">Differentiation</keyword>
<keyword id="KW-1185">Reference proteome</keyword>
<keyword id="KW-0964">Secreted</keyword>
<keyword id="KW-0732">Signal</keyword>
<dbReference type="EMBL" id="AB011028">
    <property type="status" value="NOT_ANNOTATED_CDS"/>
    <property type="molecule type" value="mRNA"/>
</dbReference>
<dbReference type="RefSeq" id="XP_038949907.1">
    <molecule id="P85411-1"/>
    <property type="nucleotide sequence ID" value="XM_039093979.2"/>
</dbReference>
<dbReference type="RefSeq" id="XP_063129026.1">
    <molecule id="P85411-2"/>
    <property type="nucleotide sequence ID" value="XM_063272956.1"/>
</dbReference>
<dbReference type="FunCoup" id="P85411">
    <property type="interactions" value="6"/>
</dbReference>
<dbReference type="PhosphoSitePlus" id="P85411"/>
<dbReference type="GeneID" id="65186"/>
<dbReference type="AGR" id="RGD:71086"/>
<dbReference type="RGD" id="71086">
    <property type="gene designation" value="Krtdap"/>
</dbReference>
<dbReference type="InParanoid" id="P85411"/>
<dbReference type="OrthoDB" id="9627508at2759"/>
<dbReference type="PhylomeDB" id="P85411"/>
<dbReference type="PRO" id="PR:P85411"/>
<dbReference type="Proteomes" id="UP000002494">
    <property type="component" value="Unplaced"/>
</dbReference>
<dbReference type="GO" id="GO:0005615">
    <property type="term" value="C:extracellular space"/>
    <property type="evidence" value="ECO:0000266"/>
    <property type="project" value="RGD"/>
</dbReference>
<dbReference type="GO" id="GO:0042599">
    <property type="term" value="C:lamellar body"/>
    <property type="evidence" value="ECO:0000266"/>
    <property type="project" value="RGD"/>
</dbReference>
<dbReference type="GO" id="GO:0030154">
    <property type="term" value="P:cell differentiation"/>
    <property type="evidence" value="ECO:0007669"/>
    <property type="project" value="UniProtKB-KW"/>
</dbReference>
<dbReference type="GO" id="GO:0008544">
    <property type="term" value="P:epidermis development"/>
    <property type="evidence" value="ECO:0000314"/>
    <property type="project" value="RGD"/>
</dbReference>
<dbReference type="InterPro" id="IPR028196">
    <property type="entry name" value="KRTDAP"/>
</dbReference>
<dbReference type="PANTHER" id="PTHR36463">
    <property type="entry name" value="KERATINOCYTE DIFFERENTIATION-ASSOCIATED PROTEIN"/>
    <property type="match status" value="1"/>
</dbReference>
<dbReference type="PANTHER" id="PTHR36463:SF1">
    <property type="entry name" value="KERATINOCYTE DIFFERENTIATION-ASSOCIATED PROTEIN"/>
    <property type="match status" value="1"/>
</dbReference>
<dbReference type="Pfam" id="PF15200">
    <property type="entry name" value="KRTDAP"/>
    <property type="match status" value="1"/>
</dbReference>